<comment type="function">
    <text evidence="1">Endoribonuclease that initiates mRNA decay.</text>
</comment>
<comment type="subcellular location">
    <subcellularLocation>
        <location evidence="1">Cell membrane</location>
        <topology evidence="1">Single-pass membrane protein</topology>
    </subcellularLocation>
</comment>
<comment type="similarity">
    <text evidence="1">Belongs to the RNase Y family.</text>
</comment>
<dbReference type="EC" id="3.1.-.-" evidence="1"/>
<dbReference type="EMBL" id="AE004092">
    <property type="protein sequence ID" value="AAK34403.1"/>
    <property type="molecule type" value="Genomic_DNA"/>
</dbReference>
<dbReference type="EMBL" id="CP000017">
    <property type="protein sequence ID" value="AAZ51960.1"/>
    <property type="molecule type" value="Genomic_DNA"/>
</dbReference>
<dbReference type="RefSeq" id="NP_269682.1">
    <property type="nucleotide sequence ID" value="NC_002737.2"/>
</dbReference>
<dbReference type="SMR" id="P67284"/>
<dbReference type="PaxDb" id="1314-HKU360_01390"/>
<dbReference type="KEGG" id="spy:SPy_1633"/>
<dbReference type="KEGG" id="spz:M5005_Spy1342"/>
<dbReference type="PATRIC" id="fig|160490.10.peg.1424"/>
<dbReference type="HOGENOM" id="CLU_028328_1_0_9"/>
<dbReference type="OMA" id="MEYPGQI"/>
<dbReference type="Proteomes" id="UP000000750">
    <property type="component" value="Chromosome"/>
</dbReference>
<dbReference type="GO" id="GO:0005886">
    <property type="term" value="C:plasma membrane"/>
    <property type="evidence" value="ECO:0007669"/>
    <property type="project" value="UniProtKB-SubCell"/>
</dbReference>
<dbReference type="GO" id="GO:0003723">
    <property type="term" value="F:RNA binding"/>
    <property type="evidence" value="ECO:0007669"/>
    <property type="project" value="UniProtKB-UniRule"/>
</dbReference>
<dbReference type="GO" id="GO:0004521">
    <property type="term" value="F:RNA endonuclease activity"/>
    <property type="evidence" value="ECO:0007669"/>
    <property type="project" value="UniProtKB-UniRule"/>
</dbReference>
<dbReference type="GO" id="GO:0006402">
    <property type="term" value="P:mRNA catabolic process"/>
    <property type="evidence" value="ECO:0007669"/>
    <property type="project" value="UniProtKB-UniRule"/>
</dbReference>
<dbReference type="CDD" id="cd00077">
    <property type="entry name" value="HDc"/>
    <property type="match status" value="1"/>
</dbReference>
<dbReference type="CDD" id="cd22431">
    <property type="entry name" value="KH-I_RNaseY"/>
    <property type="match status" value="1"/>
</dbReference>
<dbReference type="FunFam" id="1.10.3210.10:FF:000003">
    <property type="entry name" value="Ribonuclease Y"/>
    <property type="match status" value="1"/>
</dbReference>
<dbReference type="Gene3D" id="1.10.3210.10">
    <property type="entry name" value="Hypothetical protein af1432"/>
    <property type="match status" value="1"/>
</dbReference>
<dbReference type="Gene3D" id="3.30.1370.10">
    <property type="entry name" value="K Homology domain, type 1"/>
    <property type="match status" value="1"/>
</dbReference>
<dbReference type="HAMAP" id="MF_00335">
    <property type="entry name" value="RNase_Y"/>
    <property type="match status" value="1"/>
</dbReference>
<dbReference type="InterPro" id="IPR003607">
    <property type="entry name" value="HD/PDEase_dom"/>
</dbReference>
<dbReference type="InterPro" id="IPR006674">
    <property type="entry name" value="HD_domain"/>
</dbReference>
<dbReference type="InterPro" id="IPR006675">
    <property type="entry name" value="HDIG_dom"/>
</dbReference>
<dbReference type="InterPro" id="IPR004087">
    <property type="entry name" value="KH_dom"/>
</dbReference>
<dbReference type="InterPro" id="IPR004088">
    <property type="entry name" value="KH_dom_type_1"/>
</dbReference>
<dbReference type="InterPro" id="IPR036612">
    <property type="entry name" value="KH_dom_type_1_sf"/>
</dbReference>
<dbReference type="InterPro" id="IPR017705">
    <property type="entry name" value="Ribonuclease_Y"/>
</dbReference>
<dbReference type="InterPro" id="IPR022711">
    <property type="entry name" value="RNase_Y_N"/>
</dbReference>
<dbReference type="NCBIfam" id="TIGR00277">
    <property type="entry name" value="HDIG"/>
    <property type="match status" value="1"/>
</dbReference>
<dbReference type="NCBIfam" id="NF000997">
    <property type="entry name" value="PRK00106.1"/>
    <property type="match status" value="1"/>
</dbReference>
<dbReference type="NCBIfam" id="TIGR03319">
    <property type="entry name" value="RNase_Y"/>
    <property type="match status" value="1"/>
</dbReference>
<dbReference type="PANTHER" id="PTHR12826">
    <property type="entry name" value="RIBONUCLEASE Y"/>
    <property type="match status" value="1"/>
</dbReference>
<dbReference type="PANTHER" id="PTHR12826:SF15">
    <property type="entry name" value="RIBONUCLEASE Y"/>
    <property type="match status" value="1"/>
</dbReference>
<dbReference type="Pfam" id="PF01966">
    <property type="entry name" value="HD"/>
    <property type="match status" value="1"/>
</dbReference>
<dbReference type="Pfam" id="PF00013">
    <property type="entry name" value="KH_1"/>
    <property type="match status" value="1"/>
</dbReference>
<dbReference type="Pfam" id="PF12072">
    <property type="entry name" value="RNase_Y_N"/>
    <property type="match status" value="1"/>
</dbReference>
<dbReference type="SMART" id="SM00471">
    <property type="entry name" value="HDc"/>
    <property type="match status" value="1"/>
</dbReference>
<dbReference type="SMART" id="SM00322">
    <property type="entry name" value="KH"/>
    <property type="match status" value="1"/>
</dbReference>
<dbReference type="SUPFAM" id="SSF54791">
    <property type="entry name" value="Eukaryotic type KH-domain (KH-domain type I)"/>
    <property type="match status" value="1"/>
</dbReference>
<dbReference type="SUPFAM" id="SSF109604">
    <property type="entry name" value="HD-domain/PDEase-like"/>
    <property type="match status" value="1"/>
</dbReference>
<dbReference type="PROSITE" id="PS51831">
    <property type="entry name" value="HD"/>
    <property type="match status" value="1"/>
</dbReference>
<dbReference type="PROSITE" id="PS50084">
    <property type="entry name" value="KH_TYPE_1"/>
    <property type="match status" value="1"/>
</dbReference>
<keyword id="KW-1003">Cell membrane</keyword>
<keyword id="KW-0255">Endonuclease</keyword>
<keyword id="KW-0378">Hydrolase</keyword>
<keyword id="KW-0472">Membrane</keyword>
<keyword id="KW-0540">Nuclease</keyword>
<keyword id="KW-1185">Reference proteome</keyword>
<keyword id="KW-0694">RNA-binding</keyword>
<keyword id="KW-0812">Transmembrane</keyword>
<keyword id="KW-1133">Transmembrane helix</keyword>
<accession>P67284</accession>
<accession>Q48XG5</accession>
<accession>Q99YM4</accession>
<gene>
    <name evidence="1" type="primary">rny</name>
    <name type="ordered locus">SPy_1633</name>
    <name type="ordered locus">M5005_Spy1342</name>
</gene>
<reference key="1">
    <citation type="journal article" date="2001" name="Proc. Natl. Acad. Sci. U.S.A.">
        <title>Complete genome sequence of an M1 strain of Streptococcus pyogenes.</title>
        <authorList>
            <person name="Ferretti J.J."/>
            <person name="McShan W.M."/>
            <person name="Ajdic D.J."/>
            <person name="Savic D.J."/>
            <person name="Savic G."/>
            <person name="Lyon K."/>
            <person name="Primeaux C."/>
            <person name="Sezate S."/>
            <person name="Suvorov A.N."/>
            <person name="Kenton S."/>
            <person name="Lai H.S."/>
            <person name="Lin S.P."/>
            <person name="Qian Y."/>
            <person name="Jia H.G."/>
            <person name="Najar F.Z."/>
            <person name="Ren Q."/>
            <person name="Zhu H."/>
            <person name="Song L."/>
            <person name="White J."/>
            <person name="Yuan X."/>
            <person name="Clifton S.W."/>
            <person name="Roe B.A."/>
            <person name="McLaughlin R.E."/>
        </authorList>
    </citation>
    <scope>NUCLEOTIDE SEQUENCE [LARGE SCALE GENOMIC DNA]</scope>
    <source>
        <strain>ATCC 700294 / SF370 / Serotype M1</strain>
    </source>
</reference>
<reference key="2">
    <citation type="journal article" date="2005" name="J. Infect. Dis.">
        <title>Evolutionary origin and emergence of a highly successful clone of serotype M1 group A Streptococcus involved multiple horizontal gene transfer events.</title>
        <authorList>
            <person name="Sumby P."/>
            <person name="Porcella S.F."/>
            <person name="Madrigal A.G."/>
            <person name="Barbian K.D."/>
            <person name="Virtaneva K."/>
            <person name="Ricklefs S.M."/>
            <person name="Sturdevant D.E."/>
            <person name="Graham M.R."/>
            <person name="Vuopio-Varkila J."/>
            <person name="Hoe N.P."/>
            <person name="Musser J.M."/>
        </authorList>
    </citation>
    <scope>NUCLEOTIDE SEQUENCE [LARGE SCALE GENOMIC DNA]</scope>
    <source>
        <strain>ATCC BAA-947 / MGAS5005 / Serotype M1</strain>
    </source>
</reference>
<organism>
    <name type="scientific">Streptococcus pyogenes serotype M1</name>
    <dbReference type="NCBI Taxonomy" id="301447"/>
    <lineage>
        <taxon>Bacteria</taxon>
        <taxon>Bacillati</taxon>
        <taxon>Bacillota</taxon>
        <taxon>Bacilli</taxon>
        <taxon>Lactobacillales</taxon>
        <taxon>Streptococcaceae</taxon>
        <taxon>Streptococcus</taxon>
    </lineage>
</organism>
<protein>
    <recommendedName>
        <fullName evidence="1">Ribonuclease Y</fullName>
        <shortName evidence="1">RNase Y</shortName>
        <ecNumber evidence="1">3.1.-.-</ecNumber>
    </recommendedName>
</protein>
<sequence length="535" mass="60381">MVNIILLIVSALIGLILGYALISIRLKSAKEAAELTLLNAEQEAVDIRGKAEVDAEHIKKTAKRESKANRKELLLEAKEEARKYREEIEQEFKSERQELKQLETRLAERSLTLDRKDENLSSKEKVLDSKEQSLTDKSKHIDERQLQVEKLEEEKKAELEKVAAMTIAEAREVILMETENKLTHEIATRIRDAERDIKDRTVKTAKDLLAQAMQRLAGEYVTEQTITSVHLPDDNMKGRIIGREGRNIRTLESLTGIDVIIDDTPEVVILSGFDPIRREIARMTLESLIADGRIHPARIEELVEKNRLEMDNRIREYGEAAAYEIGAPNLHPDLIKIMGRLQFRTSFGQNVLRHSVEVGKLAGILAGELGENVALARRAGFLHDMGKAIDREVEGSHVEIGMEFARKYKEHPVVVNTIASHHGDVEPDSVIAVLVAAADALSSARPGARNESMENYIKRLRDLEEIATSFDGVQNSFALQAGREIRIMVQPEKISDDQVVILSHKVREKIENNLDYPGNIKVTVIREMRAVDYAK</sequence>
<feature type="chain" id="PRO_0000163799" description="Ribonuclease Y">
    <location>
        <begin position="1"/>
        <end position="535"/>
    </location>
</feature>
<feature type="transmembrane region" description="Helical" evidence="1">
    <location>
        <begin position="4"/>
        <end position="24"/>
    </location>
</feature>
<feature type="domain" description="KH" evidence="1">
    <location>
        <begin position="225"/>
        <end position="285"/>
    </location>
</feature>
<feature type="domain" description="HD" evidence="2">
    <location>
        <begin position="351"/>
        <end position="444"/>
    </location>
</feature>
<feature type="region of interest" description="Disordered" evidence="3">
    <location>
        <begin position="118"/>
        <end position="141"/>
    </location>
</feature>
<evidence type="ECO:0000255" key="1">
    <source>
        <dbReference type="HAMAP-Rule" id="MF_00335"/>
    </source>
</evidence>
<evidence type="ECO:0000255" key="2">
    <source>
        <dbReference type="PROSITE-ProRule" id="PRU01175"/>
    </source>
</evidence>
<evidence type="ECO:0000256" key="3">
    <source>
        <dbReference type="SAM" id="MobiDB-lite"/>
    </source>
</evidence>
<name>RNY_STRP1</name>
<proteinExistence type="inferred from homology"/>